<reference key="1">
    <citation type="journal article" date="2008" name="BMC Microbiol.">
        <title>Complete genome sequence of Treponema pallidum ssp. pallidum strain SS14 determined with oligonucleotide arrays.</title>
        <authorList>
            <person name="Matejkova P."/>
            <person name="Strouhal M."/>
            <person name="Smajs D."/>
            <person name="Norris S.J."/>
            <person name="Palzkill T."/>
            <person name="Petrosino J.F."/>
            <person name="Sodergren E."/>
            <person name="Norton J.E."/>
            <person name="Singh J."/>
            <person name="Richmond T.A."/>
            <person name="Molla M.N."/>
            <person name="Albert T.J."/>
            <person name="Weinstock G.M."/>
        </authorList>
    </citation>
    <scope>NUCLEOTIDE SEQUENCE [LARGE SCALE GENOMIC DNA]</scope>
    <source>
        <strain>SS14</strain>
    </source>
</reference>
<dbReference type="EC" id="6.1.1.17" evidence="1"/>
<dbReference type="EMBL" id="CP000805">
    <property type="protein sequence ID" value="ACD71091.1"/>
    <property type="molecule type" value="Genomic_DNA"/>
</dbReference>
<dbReference type="RefSeq" id="WP_010882118.1">
    <property type="nucleotide sequence ID" value="NC_021508.1"/>
</dbReference>
<dbReference type="SMR" id="B2S3R2"/>
<dbReference type="GeneID" id="93876441"/>
<dbReference type="KEGG" id="tpp:TPASS_0673"/>
<dbReference type="PATRIC" id="fig|455434.6.peg.666"/>
<dbReference type="Proteomes" id="UP000001202">
    <property type="component" value="Chromosome"/>
</dbReference>
<dbReference type="GO" id="GO:0005829">
    <property type="term" value="C:cytosol"/>
    <property type="evidence" value="ECO:0007669"/>
    <property type="project" value="TreeGrafter"/>
</dbReference>
<dbReference type="GO" id="GO:0005524">
    <property type="term" value="F:ATP binding"/>
    <property type="evidence" value="ECO:0007669"/>
    <property type="project" value="UniProtKB-UniRule"/>
</dbReference>
<dbReference type="GO" id="GO:0004818">
    <property type="term" value="F:glutamate-tRNA ligase activity"/>
    <property type="evidence" value="ECO:0007669"/>
    <property type="project" value="UniProtKB-UniRule"/>
</dbReference>
<dbReference type="GO" id="GO:0000049">
    <property type="term" value="F:tRNA binding"/>
    <property type="evidence" value="ECO:0007669"/>
    <property type="project" value="InterPro"/>
</dbReference>
<dbReference type="GO" id="GO:0008270">
    <property type="term" value="F:zinc ion binding"/>
    <property type="evidence" value="ECO:0007669"/>
    <property type="project" value="UniProtKB-UniRule"/>
</dbReference>
<dbReference type="GO" id="GO:0006424">
    <property type="term" value="P:glutamyl-tRNA aminoacylation"/>
    <property type="evidence" value="ECO:0007669"/>
    <property type="project" value="UniProtKB-UniRule"/>
</dbReference>
<dbReference type="CDD" id="cd00808">
    <property type="entry name" value="GluRS_core"/>
    <property type="match status" value="1"/>
</dbReference>
<dbReference type="FunFam" id="3.40.50.620:FF:000045">
    <property type="entry name" value="Glutamate--tRNA ligase, mitochondrial"/>
    <property type="match status" value="1"/>
</dbReference>
<dbReference type="Gene3D" id="1.10.10.350">
    <property type="match status" value="1"/>
</dbReference>
<dbReference type="Gene3D" id="1.10.8.70">
    <property type="entry name" value="Glutamate-tRNA synthetase, class I, anticodon-binding domain 1"/>
    <property type="match status" value="1"/>
</dbReference>
<dbReference type="Gene3D" id="3.40.50.620">
    <property type="entry name" value="HUPs"/>
    <property type="match status" value="1"/>
</dbReference>
<dbReference type="HAMAP" id="MF_00022">
    <property type="entry name" value="Glu_tRNA_synth_type1"/>
    <property type="match status" value="1"/>
</dbReference>
<dbReference type="InterPro" id="IPR045462">
    <property type="entry name" value="aa-tRNA-synth_I_cd-bd"/>
</dbReference>
<dbReference type="InterPro" id="IPR020751">
    <property type="entry name" value="aa-tRNA-synth_I_codon-bd_sub2"/>
</dbReference>
<dbReference type="InterPro" id="IPR008925">
    <property type="entry name" value="aa_tRNA-synth_I_cd-bd_sf"/>
</dbReference>
<dbReference type="InterPro" id="IPR004527">
    <property type="entry name" value="Glu-tRNA-ligase_bac/mito"/>
</dbReference>
<dbReference type="InterPro" id="IPR020752">
    <property type="entry name" value="Glu-tRNA-synth_I_codon-bd_sub1"/>
</dbReference>
<dbReference type="InterPro" id="IPR000924">
    <property type="entry name" value="Glu/Gln-tRNA-synth"/>
</dbReference>
<dbReference type="InterPro" id="IPR020058">
    <property type="entry name" value="Glu/Gln-tRNA-synth_Ib_cat-dom"/>
</dbReference>
<dbReference type="InterPro" id="IPR049940">
    <property type="entry name" value="GluQ/Sye"/>
</dbReference>
<dbReference type="InterPro" id="IPR033910">
    <property type="entry name" value="GluRS_core"/>
</dbReference>
<dbReference type="InterPro" id="IPR014729">
    <property type="entry name" value="Rossmann-like_a/b/a_fold"/>
</dbReference>
<dbReference type="NCBIfam" id="TIGR00464">
    <property type="entry name" value="gltX_bact"/>
    <property type="match status" value="1"/>
</dbReference>
<dbReference type="PANTHER" id="PTHR43311">
    <property type="entry name" value="GLUTAMATE--TRNA LIGASE"/>
    <property type="match status" value="1"/>
</dbReference>
<dbReference type="PANTHER" id="PTHR43311:SF2">
    <property type="entry name" value="GLUTAMATE--TRNA LIGASE, MITOCHONDRIAL-RELATED"/>
    <property type="match status" value="1"/>
</dbReference>
<dbReference type="Pfam" id="PF19269">
    <property type="entry name" value="Anticodon_2"/>
    <property type="match status" value="1"/>
</dbReference>
<dbReference type="Pfam" id="PF00749">
    <property type="entry name" value="tRNA-synt_1c"/>
    <property type="match status" value="1"/>
</dbReference>
<dbReference type="PRINTS" id="PR00987">
    <property type="entry name" value="TRNASYNTHGLU"/>
</dbReference>
<dbReference type="SUPFAM" id="SSF48163">
    <property type="entry name" value="An anticodon-binding domain of class I aminoacyl-tRNA synthetases"/>
    <property type="match status" value="1"/>
</dbReference>
<dbReference type="SUPFAM" id="SSF52374">
    <property type="entry name" value="Nucleotidylyl transferase"/>
    <property type="match status" value="1"/>
</dbReference>
<keyword id="KW-0030">Aminoacyl-tRNA synthetase</keyword>
<keyword id="KW-0067">ATP-binding</keyword>
<keyword id="KW-0963">Cytoplasm</keyword>
<keyword id="KW-0436">Ligase</keyword>
<keyword id="KW-0479">Metal-binding</keyword>
<keyword id="KW-0547">Nucleotide-binding</keyword>
<keyword id="KW-0648">Protein biosynthesis</keyword>
<keyword id="KW-0862">Zinc</keyword>
<protein>
    <recommendedName>
        <fullName evidence="1">Glutamate--tRNA ligase</fullName>
        <ecNumber evidence="1">6.1.1.17</ecNumber>
    </recommendedName>
    <alternativeName>
        <fullName evidence="1">Glutamyl-tRNA synthetase</fullName>
        <shortName evidence="1">GluRS</shortName>
    </alternativeName>
</protein>
<comment type="function">
    <text evidence="1">Catalyzes the attachment of glutamate to tRNA(Glu) in a two-step reaction: glutamate is first activated by ATP to form Glu-AMP and then transferred to the acceptor end of tRNA(Glu).</text>
</comment>
<comment type="catalytic activity">
    <reaction evidence="1">
        <text>tRNA(Glu) + L-glutamate + ATP = L-glutamyl-tRNA(Glu) + AMP + diphosphate</text>
        <dbReference type="Rhea" id="RHEA:23540"/>
        <dbReference type="Rhea" id="RHEA-COMP:9663"/>
        <dbReference type="Rhea" id="RHEA-COMP:9680"/>
        <dbReference type="ChEBI" id="CHEBI:29985"/>
        <dbReference type="ChEBI" id="CHEBI:30616"/>
        <dbReference type="ChEBI" id="CHEBI:33019"/>
        <dbReference type="ChEBI" id="CHEBI:78442"/>
        <dbReference type="ChEBI" id="CHEBI:78520"/>
        <dbReference type="ChEBI" id="CHEBI:456215"/>
        <dbReference type="EC" id="6.1.1.17"/>
    </reaction>
</comment>
<comment type="cofactor">
    <cofactor evidence="1">
        <name>Zn(2+)</name>
        <dbReference type="ChEBI" id="CHEBI:29105"/>
    </cofactor>
    <text evidence="1">Binds 1 zinc ion per subunit.</text>
</comment>
<comment type="subunit">
    <text evidence="1">Monomer.</text>
</comment>
<comment type="subcellular location">
    <subcellularLocation>
        <location evidence="1">Cytoplasm</location>
    </subcellularLocation>
</comment>
<comment type="similarity">
    <text evidence="1">Belongs to the class-I aminoacyl-tRNA synthetase family. Glutamate--tRNA ligase type 1 subfamily.</text>
</comment>
<gene>
    <name evidence="1" type="primary">gltX</name>
    <name type="ordered locus">TPASS_0673</name>
</gene>
<feature type="chain" id="PRO_1000090117" description="Glutamate--tRNA ligase">
    <location>
        <begin position="1"/>
        <end position="537"/>
    </location>
</feature>
<feature type="short sequence motif" description="'HIGH' region" evidence="1">
    <location>
        <begin position="9"/>
        <end position="19"/>
    </location>
</feature>
<feature type="short sequence motif" description="'KMSKS' region" evidence="1">
    <location>
        <begin position="270"/>
        <end position="274"/>
    </location>
</feature>
<feature type="binding site" evidence="1">
    <location>
        <position position="125"/>
    </location>
    <ligand>
        <name>Zn(2+)</name>
        <dbReference type="ChEBI" id="CHEBI:29105"/>
    </ligand>
</feature>
<feature type="binding site" evidence="1">
    <location>
        <position position="127"/>
    </location>
    <ligand>
        <name>Zn(2+)</name>
        <dbReference type="ChEBI" id="CHEBI:29105"/>
    </ligand>
</feature>
<feature type="binding site" evidence="1">
    <location>
        <position position="152"/>
    </location>
    <ligand>
        <name>Zn(2+)</name>
        <dbReference type="ChEBI" id="CHEBI:29105"/>
    </ligand>
</feature>
<feature type="binding site" evidence="1">
    <location>
        <position position="154"/>
    </location>
    <ligand>
        <name>Zn(2+)</name>
        <dbReference type="ChEBI" id="CHEBI:29105"/>
    </ligand>
</feature>
<feature type="binding site" evidence="1">
    <location>
        <position position="273"/>
    </location>
    <ligand>
        <name>ATP</name>
        <dbReference type="ChEBI" id="CHEBI:30616"/>
    </ligand>
</feature>
<proteinExistence type="inferred from homology"/>
<organism>
    <name type="scientific">Treponema pallidum subsp. pallidum (strain SS14)</name>
    <dbReference type="NCBI Taxonomy" id="455434"/>
    <lineage>
        <taxon>Bacteria</taxon>
        <taxon>Pseudomonadati</taxon>
        <taxon>Spirochaetota</taxon>
        <taxon>Spirochaetia</taxon>
        <taxon>Spirochaetales</taxon>
        <taxon>Treponemataceae</taxon>
        <taxon>Treponema</taxon>
    </lineage>
</organism>
<accession>B2S3R2</accession>
<evidence type="ECO:0000255" key="1">
    <source>
        <dbReference type="HAMAP-Rule" id="MF_00022"/>
    </source>
</evidence>
<sequence length="537" mass="59840">MEVRVRYAPSPTGLQHIGGIRTALFNFLFARAHAGVFVLRVEDTDRSRCTAAFEQNLYDTLRWLGVSWDEGGGCPETAVKQGARGDGRSVAHAGGAYGPYTQSARTDLYRAQVARLVETGQAYYCFCDASRLERVRKIRTLNRMPPGYDRHCRELLPEEVRECLASGVPHVIRFKVPLEGSTHFRDALLGDIEWQNEEINPDPILLKSDGFPTYHLANVVDDHAMRITHVLRAQEWVPSTPLHLLLYRAFGWQPPLFCHLPMVMGADGHKLSKRHGATSCDEFRNAGYLPEALLNYVAMLGCSYGEGQDLFTREQLCAHFSLSRLNKSPAVFDYKKLAWFNGQYIRAKSDEQLCALVWPFIANAGVCGHIPADVEAGAVRTRRFADEAPCAPTEAQRSMLMRVIPLIKERLRFLTDAPELVRCFFQEPSLPEQGVFVPKRLDVAQVRAVLVRARGLVHEIVSASEPDVEVLLRAEAEKFGIKLGDFLMPIRVALTGATVSAPLVGTIRILGASRSCARIEHVIRERFSDDSQGVGGG</sequence>
<name>SYE_TREPS</name>